<name>CYSG_SALPK</name>
<gene>
    <name evidence="1" type="primary">cysG</name>
    <name type="ordered locus">SSPA3121</name>
</gene>
<feature type="chain" id="PRO_1000186957" description="Siroheme synthase">
    <location>
        <begin position="1"/>
        <end position="457"/>
    </location>
</feature>
<feature type="region of interest" description="Precorrin-2 dehydrogenase /sirohydrochlorin ferrochelatase" evidence="1">
    <location>
        <begin position="1"/>
        <end position="204"/>
    </location>
</feature>
<feature type="region of interest" description="Uroporphyrinogen-III C-methyltransferase" evidence="1">
    <location>
        <begin position="216"/>
        <end position="457"/>
    </location>
</feature>
<feature type="active site" description="Proton acceptor" evidence="1">
    <location>
        <position position="248"/>
    </location>
</feature>
<feature type="active site" description="Proton donor" evidence="1">
    <location>
        <position position="270"/>
    </location>
</feature>
<feature type="binding site" evidence="1">
    <location>
        <begin position="22"/>
        <end position="23"/>
    </location>
    <ligand>
        <name>NAD(+)</name>
        <dbReference type="ChEBI" id="CHEBI:57540"/>
    </ligand>
</feature>
<feature type="binding site" evidence="1">
    <location>
        <begin position="43"/>
        <end position="44"/>
    </location>
    <ligand>
        <name>NAD(+)</name>
        <dbReference type="ChEBI" id="CHEBI:57540"/>
    </ligand>
</feature>
<feature type="binding site" evidence="1">
    <location>
        <position position="225"/>
    </location>
    <ligand>
        <name>S-adenosyl-L-methionine</name>
        <dbReference type="ChEBI" id="CHEBI:59789"/>
    </ligand>
</feature>
<feature type="binding site" evidence="1">
    <location>
        <begin position="301"/>
        <end position="303"/>
    </location>
    <ligand>
        <name>S-adenosyl-L-methionine</name>
        <dbReference type="ChEBI" id="CHEBI:59789"/>
    </ligand>
</feature>
<feature type="binding site" evidence="1">
    <location>
        <position position="306"/>
    </location>
    <ligand>
        <name>S-adenosyl-L-methionine</name>
        <dbReference type="ChEBI" id="CHEBI:59789"/>
    </ligand>
</feature>
<feature type="binding site" evidence="1">
    <location>
        <begin position="331"/>
        <end position="332"/>
    </location>
    <ligand>
        <name>S-adenosyl-L-methionine</name>
        <dbReference type="ChEBI" id="CHEBI:59789"/>
    </ligand>
</feature>
<feature type="binding site" evidence="1">
    <location>
        <position position="382"/>
    </location>
    <ligand>
        <name>S-adenosyl-L-methionine</name>
        <dbReference type="ChEBI" id="CHEBI:59789"/>
    </ligand>
</feature>
<feature type="binding site" evidence="1">
    <location>
        <position position="411"/>
    </location>
    <ligand>
        <name>S-adenosyl-L-methionine</name>
        <dbReference type="ChEBI" id="CHEBI:59789"/>
    </ligand>
</feature>
<feature type="modified residue" description="Phosphoserine" evidence="1">
    <location>
        <position position="128"/>
    </location>
</feature>
<evidence type="ECO:0000255" key="1">
    <source>
        <dbReference type="HAMAP-Rule" id="MF_01646"/>
    </source>
</evidence>
<proteinExistence type="inferred from homology"/>
<organism>
    <name type="scientific">Salmonella paratyphi A (strain AKU_12601)</name>
    <dbReference type="NCBI Taxonomy" id="554290"/>
    <lineage>
        <taxon>Bacteria</taxon>
        <taxon>Pseudomonadati</taxon>
        <taxon>Pseudomonadota</taxon>
        <taxon>Gammaproteobacteria</taxon>
        <taxon>Enterobacterales</taxon>
        <taxon>Enterobacteriaceae</taxon>
        <taxon>Salmonella</taxon>
    </lineage>
</organism>
<sequence>MDHLPIFCQLRDRDCLIVGGGDVAERKARLLLEAGARLTVNALNFIPQFTVWANEGMLTLVEGPFDETLLDSCWLAIAATDDDTVNQRVSDAAESRRIFCNVVDAPKAASFIMPSIIDRSPLMVAVSSGGTSPVLARLLREKLESLLPQHLGQVARYAGQLRARVKKQFATMGERRRFWEKFFVNDRLAQSLANADEKAVNATTERLFSEPLDHRGEVVLVGAGPGDAGLLTLKGLQQIQQADIVVYDRLVSDDIMNLVRRDADRVFVGKRAGYHCVPQEEINQILLREAQKGKRVVRLKGGDPFIFGRGGEELETLCHAGIPFSVVPGITAASGCSAYSGIPLTHRDYAQSVRLVTGHLKTGGELDWENLAAEKQTLVFYMGLNQAATIQEKLIAFGMQADMPVALVENGTSVKQRVVHGVLTQLGELAQQVESPALIIVGRVVALRDKLNWFSNH</sequence>
<protein>
    <recommendedName>
        <fullName evidence="1">Siroheme synthase</fullName>
    </recommendedName>
    <domain>
        <recommendedName>
            <fullName evidence="1">Uroporphyrinogen-III C-methyltransferase</fullName>
            <shortName evidence="1">Urogen III methylase</shortName>
            <ecNumber evidence="1">2.1.1.107</ecNumber>
        </recommendedName>
        <alternativeName>
            <fullName evidence="1">SUMT</fullName>
        </alternativeName>
        <alternativeName>
            <fullName evidence="1">Uroporphyrinogen III methylase</fullName>
            <shortName evidence="1">UROM</shortName>
        </alternativeName>
    </domain>
    <domain>
        <recommendedName>
            <fullName evidence="1">Precorrin-2 dehydrogenase</fullName>
            <ecNumber evidence="1">1.3.1.76</ecNumber>
        </recommendedName>
    </domain>
    <domain>
        <recommendedName>
            <fullName evidence="1">Sirohydrochlorin ferrochelatase</fullName>
            <ecNumber evidence="1">4.99.1.4</ecNumber>
        </recommendedName>
    </domain>
</protein>
<keyword id="KW-0169">Cobalamin biosynthesis</keyword>
<keyword id="KW-0456">Lyase</keyword>
<keyword id="KW-0489">Methyltransferase</keyword>
<keyword id="KW-0511">Multifunctional enzyme</keyword>
<keyword id="KW-0520">NAD</keyword>
<keyword id="KW-0560">Oxidoreductase</keyword>
<keyword id="KW-0597">Phosphoprotein</keyword>
<keyword id="KW-0627">Porphyrin biosynthesis</keyword>
<keyword id="KW-0949">S-adenosyl-L-methionine</keyword>
<keyword id="KW-0808">Transferase</keyword>
<comment type="function">
    <text evidence="1">Multifunctional enzyme that catalyzes the SAM-dependent methylations of uroporphyrinogen III at position C-2 and C-7 to form precorrin-2 via precorrin-1. Then it catalyzes the NAD-dependent ring dehydrogenation of precorrin-2 to yield sirohydrochlorin. Finally, it catalyzes the ferrochelation of sirohydrochlorin to yield siroheme.</text>
</comment>
<comment type="catalytic activity">
    <reaction evidence="1">
        <text>uroporphyrinogen III + 2 S-adenosyl-L-methionine = precorrin-2 + 2 S-adenosyl-L-homocysteine + H(+)</text>
        <dbReference type="Rhea" id="RHEA:32459"/>
        <dbReference type="ChEBI" id="CHEBI:15378"/>
        <dbReference type="ChEBI" id="CHEBI:57308"/>
        <dbReference type="ChEBI" id="CHEBI:57856"/>
        <dbReference type="ChEBI" id="CHEBI:58827"/>
        <dbReference type="ChEBI" id="CHEBI:59789"/>
        <dbReference type="EC" id="2.1.1.107"/>
    </reaction>
</comment>
<comment type="catalytic activity">
    <reaction evidence="1">
        <text>precorrin-2 + NAD(+) = sirohydrochlorin + NADH + 2 H(+)</text>
        <dbReference type="Rhea" id="RHEA:15613"/>
        <dbReference type="ChEBI" id="CHEBI:15378"/>
        <dbReference type="ChEBI" id="CHEBI:57540"/>
        <dbReference type="ChEBI" id="CHEBI:57945"/>
        <dbReference type="ChEBI" id="CHEBI:58351"/>
        <dbReference type="ChEBI" id="CHEBI:58827"/>
        <dbReference type="EC" id="1.3.1.76"/>
    </reaction>
</comment>
<comment type="catalytic activity">
    <reaction evidence="1">
        <text>siroheme + 2 H(+) = sirohydrochlorin + Fe(2+)</text>
        <dbReference type="Rhea" id="RHEA:24360"/>
        <dbReference type="ChEBI" id="CHEBI:15378"/>
        <dbReference type="ChEBI" id="CHEBI:29033"/>
        <dbReference type="ChEBI" id="CHEBI:58351"/>
        <dbReference type="ChEBI" id="CHEBI:60052"/>
        <dbReference type="EC" id="4.99.1.4"/>
    </reaction>
</comment>
<comment type="pathway">
    <text evidence="1">Cofactor biosynthesis; adenosylcobalamin biosynthesis; precorrin-2 from uroporphyrinogen III: step 1/1.</text>
</comment>
<comment type="pathway">
    <text evidence="1">Cofactor biosynthesis; adenosylcobalamin biosynthesis; sirohydrochlorin from precorrin-2: step 1/1.</text>
</comment>
<comment type="pathway">
    <text evidence="1">Porphyrin-containing compound metabolism; siroheme biosynthesis; precorrin-2 from uroporphyrinogen III: step 1/1.</text>
</comment>
<comment type="pathway">
    <text evidence="1">Porphyrin-containing compound metabolism; siroheme biosynthesis; siroheme from sirohydrochlorin: step 1/1.</text>
</comment>
<comment type="pathway">
    <text evidence="1">Porphyrin-containing compound metabolism; siroheme biosynthesis; sirohydrochlorin from precorrin-2: step 1/1.</text>
</comment>
<comment type="similarity">
    <text evidence="1">In the N-terminal section; belongs to the precorrin-2 dehydrogenase / sirohydrochlorin ferrochelatase family.</text>
</comment>
<comment type="similarity">
    <text evidence="1">In the C-terminal section; belongs to the precorrin methyltransferase family.</text>
</comment>
<reference key="1">
    <citation type="journal article" date="2009" name="BMC Genomics">
        <title>Pseudogene accumulation in the evolutionary histories of Salmonella enterica serovars Paratyphi A and Typhi.</title>
        <authorList>
            <person name="Holt K.E."/>
            <person name="Thomson N.R."/>
            <person name="Wain J."/>
            <person name="Langridge G.C."/>
            <person name="Hasan R."/>
            <person name="Bhutta Z.A."/>
            <person name="Quail M.A."/>
            <person name="Norbertczak H."/>
            <person name="Walker D."/>
            <person name="Simmonds M."/>
            <person name="White B."/>
            <person name="Bason N."/>
            <person name="Mungall K."/>
            <person name="Dougan G."/>
            <person name="Parkhill J."/>
        </authorList>
    </citation>
    <scope>NUCLEOTIDE SEQUENCE [LARGE SCALE GENOMIC DNA]</scope>
    <source>
        <strain>AKU_12601</strain>
    </source>
</reference>
<accession>B5BH22</accession>
<dbReference type="EC" id="2.1.1.107" evidence="1"/>
<dbReference type="EC" id="1.3.1.76" evidence="1"/>
<dbReference type="EC" id="4.99.1.4" evidence="1"/>
<dbReference type="EMBL" id="FM200053">
    <property type="protein sequence ID" value="CAR61373.1"/>
    <property type="molecule type" value="Genomic_DNA"/>
</dbReference>
<dbReference type="RefSeq" id="WP_000349887.1">
    <property type="nucleotide sequence ID" value="NC_011147.1"/>
</dbReference>
<dbReference type="SMR" id="B5BH22"/>
<dbReference type="KEGG" id="sek:SSPA3121"/>
<dbReference type="HOGENOM" id="CLU_011276_2_0_6"/>
<dbReference type="UniPathway" id="UPA00148">
    <property type="reaction ID" value="UER00211"/>
</dbReference>
<dbReference type="UniPathway" id="UPA00148">
    <property type="reaction ID" value="UER00222"/>
</dbReference>
<dbReference type="UniPathway" id="UPA00262">
    <property type="reaction ID" value="UER00211"/>
</dbReference>
<dbReference type="UniPathway" id="UPA00262">
    <property type="reaction ID" value="UER00222"/>
</dbReference>
<dbReference type="UniPathway" id="UPA00262">
    <property type="reaction ID" value="UER00376"/>
</dbReference>
<dbReference type="Proteomes" id="UP000001869">
    <property type="component" value="Chromosome"/>
</dbReference>
<dbReference type="GO" id="GO:0051287">
    <property type="term" value="F:NAD binding"/>
    <property type="evidence" value="ECO:0007669"/>
    <property type="project" value="InterPro"/>
</dbReference>
<dbReference type="GO" id="GO:0043115">
    <property type="term" value="F:precorrin-2 dehydrogenase activity"/>
    <property type="evidence" value="ECO:0007669"/>
    <property type="project" value="UniProtKB-UniRule"/>
</dbReference>
<dbReference type="GO" id="GO:0051266">
    <property type="term" value="F:sirohydrochlorin ferrochelatase activity"/>
    <property type="evidence" value="ECO:0007669"/>
    <property type="project" value="UniProtKB-EC"/>
</dbReference>
<dbReference type="GO" id="GO:0004851">
    <property type="term" value="F:uroporphyrin-III C-methyltransferase activity"/>
    <property type="evidence" value="ECO:0007669"/>
    <property type="project" value="UniProtKB-UniRule"/>
</dbReference>
<dbReference type="GO" id="GO:0009236">
    <property type="term" value="P:cobalamin biosynthetic process"/>
    <property type="evidence" value="ECO:0007669"/>
    <property type="project" value="UniProtKB-UniRule"/>
</dbReference>
<dbReference type="GO" id="GO:0032259">
    <property type="term" value="P:methylation"/>
    <property type="evidence" value="ECO:0007669"/>
    <property type="project" value="UniProtKB-KW"/>
</dbReference>
<dbReference type="GO" id="GO:0019354">
    <property type="term" value="P:siroheme biosynthetic process"/>
    <property type="evidence" value="ECO:0007669"/>
    <property type="project" value="UniProtKB-UniRule"/>
</dbReference>
<dbReference type="CDD" id="cd11642">
    <property type="entry name" value="SUMT"/>
    <property type="match status" value="1"/>
</dbReference>
<dbReference type="FunFam" id="1.10.8.210:FF:000001">
    <property type="entry name" value="Siroheme synthase"/>
    <property type="match status" value="1"/>
</dbReference>
<dbReference type="FunFam" id="3.30.160.110:FF:000001">
    <property type="entry name" value="Siroheme synthase"/>
    <property type="match status" value="1"/>
</dbReference>
<dbReference type="FunFam" id="3.30.950.10:FF:000001">
    <property type="entry name" value="Siroheme synthase"/>
    <property type="match status" value="1"/>
</dbReference>
<dbReference type="FunFam" id="3.40.1010.10:FF:000001">
    <property type="entry name" value="Siroheme synthase"/>
    <property type="match status" value="1"/>
</dbReference>
<dbReference type="FunFam" id="3.40.50.720:FF:000092">
    <property type="entry name" value="Siroheme synthase"/>
    <property type="match status" value="1"/>
</dbReference>
<dbReference type="Gene3D" id="3.40.1010.10">
    <property type="entry name" value="Cobalt-precorrin-4 Transmethylase, Domain 1"/>
    <property type="match status" value="1"/>
</dbReference>
<dbReference type="Gene3D" id="3.30.950.10">
    <property type="entry name" value="Methyltransferase, Cobalt-precorrin-4 Transmethylase, Domain 2"/>
    <property type="match status" value="1"/>
</dbReference>
<dbReference type="Gene3D" id="3.40.50.720">
    <property type="entry name" value="NAD(P)-binding Rossmann-like Domain"/>
    <property type="match status" value="1"/>
</dbReference>
<dbReference type="Gene3D" id="1.10.8.210">
    <property type="entry name" value="Sirohaem synthase, dimerisation domain"/>
    <property type="match status" value="1"/>
</dbReference>
<dbReference type="Gene3D" id="3.30.160.110">
    <property type="entry name" value="Siroheme synthase, domain 2"/>
    <property type="match status" value="1"/>
</dbReference>
<dbReference type="HAMAP" id="MF_01646">
    <property type="entry name" value="Siroheme_synth"/>
    <property type="match status" value="1"/>
</dbReference>
<dbReference type="InterPro" id="IPR000878">
    <property type="entry name" value="4pyrrol_Mease"/>
</dbReference>
<dbReference type="InterPro" id="IPR035996">
    <property type="entry name" value="4pyrrol_Methylase_sf"/>
</dbReference>
<dbReference type="InterPro" id="IPR014777">
    <property type="entry name" value="4pyrrole_Mease_sub1"/>
</dbReference>
<dbReference type="InterPro" id="IPR014776">
    <property type="entry name" value="4pyrrole_Mease_sub2"/>
</dbReference>
<dbReference type="InterPro" id="IPR006366">
    <property type="entry name" value="CobA/CysG_C"/>
</dbReference>
<dbReference type="InterPro" id="IPR036291">
    <property type="entry name" value="NAD(P)-bd_dom_sf"/>
</dbReference>
<dbReference type="InterPro" id="IPR050161">
    <property type="entry name" value="Siro_Cobalamin_biosynth"/>
</dbReference>
<dbReference type="InterPro" id="IPR037115">
    <property type="entry name" value="Sirohaem_synt_dimer_dom_sf"/>
</dbReference>
<dbReference type="InterPro" id="IPR012409">
    <property type="entry name" value="Sirohaem_synth"/>
</dbReference>
<dbReference type="InterPro" id="IPR028281">
    <property type="entry name" value="Sirohaem_synthase_central"/>
</dbReference>
<dbReference type="InterPro" id="IPR019478">
    <property type="entry name" value="Sirohaem_synthase_dimer_dom"/>
</dbReference>
<dbReference type="InterPro" id="IPR006367">
    <property type="entry name" value="Sirohaem_synthase_N"/>
</dbReference>
<dbReference type="InterPro" id="IPR003043">
    <property type="entry name" value="Uropor_MeTrfase_CS"/>
</dbReference>
<dbReference type="NCBIfam" id="TIGR01469">
    <property type="entry name" value="cobA_cysG_Cterm"/>
    <property type="match status" value="1"/>
</dbReference>
<dbReference type="NCBIfam" id="TIGR01470">
    <property type="entry name" value="cysG_Nterm"/>
    <property type="match status" value="1"/>
</dbReference>
<dbReference type="NCBIfam" id="NF004790">
    <property type="entry name" value="PRK06136.1"/>
    <property type="match status" value="1"/>
</dbReference>
<dbReference type="NCBIfam" id="NF007922">
    <property type="entry name" value="PRK10637.1"/>
    <property type="match status" value="1"/>
</dbReference>
<dbReference type="PANTHER" id="PTHR45790:SF1">
    <property type="entry name" value="SIROHEME SYNTHASE"/>
    <property type="match status" value="1"/>
</dbReference>
<dbReference type="PANTHER" id="PTHR45790">
    <property type="entry name" value="SIROHEME SYNTHASE-RELATED"/>
    <property type="match status" value="1"/>
</dbReference>
<dbReference type="Pfam" id="PF10414">
    <property type="entry name" value="CysG_dimeriser"/>
    <property type="match status" value="1"/>
</dbReference>
<dbReference type="Pfam" id="PF13241">
    <property type="entry name" value="NAD_binding_7"/>
    <property type="match status" value="1"/>
</dbReference>
<dbReference type="Pfam" id="PF14824">
    <property type="entry name" value="Sirohm_synth_M"/>
    <property type="match status" value="1"/>
</dbReference>
<dbReference type="Pfam" id="PF00590">
    <property type="entry name" value="TP_methylase"/>
    <property type="match status" value="1"/>
</dbReference>
<dbReference type="PIRSF" id="PIRSF036426">
    <property type="entry name" value="Sirohaem_synth"/>
    <property type="match status" value="1"/>
</dbReference>
<dbReference type="SUPFAM" id="SSF51735">
    <property type="entry name" value="NAD(P)-binding Rossmann-fold domains"/>
    <property type="match status" value="1"/>
</dbReference>
<dbReference type="SUPFAM" id="SSF75615">
    <property type="entry name" value="Siroheme synthase middle domains-like"/>
    <property type="match status" value="1"/>
</dbReference>
<dbReference type="SUPFAM" id="SSF53790">
    <property type="entry name" value="Tetrapyrrole methylase"/>
    <property type="match status" value="1"/>
</dbReference>
<dbReference type="PROSITE" id="PS00839">
    <property type="entry name" value="SUMT_1"/>
    <property type="match status" value="1"/>
</dbReference>
<dbReference type="PROSITE" id="PS00840">
    <property type="entry name" value="SUMT_2"/>
    <property type="match status" value="1"/>
</dbReference>